<organism>
    <name type="scientific">Campylobacter jejuni subsp. jejuni serotype O:2 (strain ATCC 700819 / NCTC 11168)</name>
    <dbReference type="NCBI Taxonomy" id="192222"/>
    <lineage>
        <taxon>Bacteria</taxon>
        <taxon>Pseudomonadati</taxon>
        <taxon>Campylobacterota</taxon>
        <taxon>Epsilonproteobacteria</taxon>
        <taxon>Campylobacterales</taxon>
        <taxon>Campylobacteraceae</taxon>
        <taxon>Campylobacter</taxon>
    </lineage>
</organism>
<sequence>MENEKNYRPNVAAIVLSSSYPFECKIFIARRSDMDNIWQFPQGGIDKGESVKNALFRELKEEIGTDEVEIIAEYPEWLSYDFPSKIVKKMYPYDGQIQKYFLVRLKHGATININTKHPEFDDYQFVSVKQIFEMINHFKKNIYVRVIKYFEEKGYI</sequence>
<gene>
    <name evidence="1" type="primary">rppH</name>
    <name evidence="1" type="synonym">nudH</name>
    <name type="ordered locus">Cj0581</name>
</gene>
<dbReference type="EC" id="3.6.1.-" evidence="1"/>
<dbReference type="EMBL" id="AL111168">
    <property type="protein sequence ID" value="CAL34727.1"/>
    <property type="molecule type" value="Genomic_DNA"/>
</dbReference>
<dbReference type="PIR" id="D81405">
    <property type="entry name" value="D81405"/>
</dbReference>
<dbReference type="RefSeq" id="WP_002852091.1">
    <property type="nucleotide sequence ID" value="NZ_SZUC01000002.1"/>
</dbReference>
<dbReference type="RefSeq" id="YP_002344011.1">
    <property type="nucleotide sequence ID" value="NC_002163.1"/>
</dbReference>
<dbReference type="SMR" id="Q9PHT5"/>
<dbReference type="IntAct" id="Q9PHT5">
    <property type="interactions" value="6"/>
</dbReference>
<dbReference type="STRING" id="192222.Cj0581"/>
<dbReference type="PaxDb" id="192222-Cj0581"/>
<dbReference type="EnsemblBacteria" id="CAL34727">
    <property type="protein sequence ID" value="CAL34727"/>
    <property type="gene ID" value="Cj0581"/>
</dbReference>
<dbReference type="GeneID" id="905255"/>
<dbReference type="KEGG" id="cje:Cj0581"/>
<dbReference type="PATRIC" id="fig|192222.6.peg.573"/>
<dbReference type="eggNOG" id="COG0494">
    <property type="taxonomic scope" value="Bacteria"/>
</dbReference>
<dbReference type="HOGENOM" id="CLU_087195_3_0_7"/>
<dbReference type="OrthoDB" id="9810648at2"/>
<dbReference type="Proteomes" id="UP000000799">
    <property type="component" value="Chromosome"/>
</dbReference>
<dbReference type="GO" id="GO:0016462">
    <property type="term" value="F:pyrophosphatase activity"/>
    <property type="evidence" value="ECO:0007669"/>
    <property type="project" value="UniProtKB-ARBA"/>
</dbReference>
<dbReference type="CDD" id="cd03671">
    <property type="entry name" value="NUDIX_Ap4A_hydrolase_plant_like"/>
    <property type="match status" value="1"/>
</dbReference>
<dbReference type="Gene3D" id="3.90.79.10">
    <property type="entry name" value="Nucleoside Triphosphate Pyrophosphohydrolase"/>
    <property type="match status" value="1"/>
</dbReference>
<dbReference type="HAMAP" id="MF_00298">
    <property type="entry name" value="Nudix_RppH"/>
    <property type="match status" value="1"/>
</dbReference>
<dbReference type="InterPro" id="IPR020476">
    <property type="entry name" value="Nudix_hydrolase"/>
</dbReference>
<dbReference type="InterPro" id="IPR015797">
    <property type="entry name" value="NUDIX_hydrolase-like_dom_sf"/>
</dbReference>
<dbReference type="InterPro" id="IPR020084">
    <property type="entry name" value="NUDIX_hydrolase_CS"/>
</dbReference>
<dbReference type="InterPro" id="IPR000086">
    <property type="entry name" value="NUDIX_hydrolase_dom"/>
</dbReference>
<dbReference type="InterPro" id="IPR022927">
    <property type="entry name" value="RppH"/>
</dbReference>
<dbReference type="NCBIfam" id="NF001936">
    <property type="entry name" value="PRK00714.1-3"/>
    <property type="match status" value="1"/>
</dbReference>
<dbReference type="NCBIfam" id="NF001938">
    <property type="entry name" value="PRK00714.1-5"/>
    <property type="match status" value="1"/>
</dbReference>
<dbReference type="PANTHER" id="PTHR43736">
    <property type="entry name" value="ADP-RIBOSE PYROPHOSPHATASE"/>
    <property type="match status" value="1"/>
</dbReference>
<dbReference type="PANTHER" id="PTHR43736:SF1">
    <property type="entry name" value="DIHYDRONEOPTERIN TRIPHOSPHATE DIPHOSPHATASE"/>
    <property type="match status" value="1"/>
</dbReference>
<dbReference type="Pfam" id="PF00293">
    <property type="entry name" value="NUDIX"/>
    <property type="match status" value="1"/>
</dbReference>
<dbReference type="PRINTS" id="PR00502">
    <property type="entry name" value="NUDIXFAMILY"/>
</dbReference>
<dbReference type="SUPFAM" id="SSF55811">
    <property type="entry name" value="Nudix"/>
    <property type="match status" value="1"/>
</dbReference>
<dbReference type="PROSITE" id="PS51462">
    <property type="entry name" value="NUDIX"/>
    <property type="match status" value="1"/>
</dbReference>
<dbReference type="PROSITE" id="PS00893">
    <property type="entry name" value="NUDIX_BOX"/>
    <property type="match status" value="1"/>
</dbReference>
<reference key="1">
    <citation type="journal article" date="2000" name="Nature">
        <title>The genome sequence of the food-borne pathogen Campylobacter jejuni reveals hypervariable sequences.</title>
        <authorList>
            <person name="Parkhill J."/>
            <person name="Wren B.W."/>
            <person name="Mungall K.L."/>
            <person name="Ketley J.M."/>
            <person name="Churcher C.M."/>
            <person name="Basham D."/>
            <person name="Chillingworth T."/>
            <person name="Davies R.M."/>
            <person name="Feltwell T."/>
            <person name="Holroyd S."/>
            <person name="Jagels K."/>
            <person name="Karlyshev A.V."/>
            <person name="Moule S."/>
            <person name="Pallen M.J."/>
            <person name="Penn C.W."/>
            <person name="Quail M.A."/>
            <person name="Rajandream M.A."/>
            <person name="Rutherford K.M."/>
            <person name="van Vliet A.H.M."/>
            <person name="Whitehead S."/>
            <person name="Barrell B.G."/>
        </authorList>
    </citation>
    <scope>NUCLEOTIDE SEQUENCE [LARGE SCALE GENOMIC DNA]</scope>
    <source>
        <strain>ATCC 700819 / NCTC 11168</strain>
    </source>
</reference>
<comment type="function">
    <text evidence="1">Accelerates the degradation of transcripts by removing pyrophosphate from the 5'-end of triphosphorylated RNA, leading to a more labile monophosphorylated state that can stimulate subsequent ribonuclease cleavage.</text>
</comment>
<comment type="cofactor">
    <cofactor evidence="1">
        <name>a divalent metal cation</name>
        <dbReference type="ChEBI" id="CHEBI:60240"/>
    </cofactor>
</comment>
<comment type="similarity">
    <text evidence="1">Belongs to the Nudix hydrolase family. RppH subfamily.</text>
</comment>
<name>RPPH_CAMJE</name>
<feature type="chain" id="PRO_0000057000" description="RNA pyrophosphohydrolase">
    <location>
        <begin position="1"/>
        <end position="156"/>
    </location>
</feature>
<feature type="domain" description="Nudix hydrolase" evidence="1">
    <location>
        <begin position="6"/>
        <end position="148"/>
    </location>
</feature>
<feature type="short sequence motif" description="Nudix box">
    <location>
        <begin position="43"/>
        <end position="64"/>
    </location>
</feature>
<protein>
    <recommendedName>
        <fullName evidence="1">RNA pyrophosphohydrolase</fullName>
        <ecNumber evidence="1">3.6.1.-</ecNumber>
    </recommendedName>
    <alternativeName>
        <fullName evidence="1">(Di)nucleoside polyphosphate hydrolase</fullName>
    </alternativeName>
</protein>
<evidence type="ECO:0000255" key="1">
    <source>
        <dbReference type="HAMAP-Rule" id="MF_00298"/>
    </source>
</evidence>
<proteinExistence type="inferred from homology"/>
<keyword id="KW-0378">Hydrolase</keyword>
<keyword id="KW-1185">Reference proteome</keyword>
<accession>Q9PHT5</accession>
<accession>Q0PAT6</accession>